<comment type="similarity">
    <text evidence="1">Belongs to the bacterial ribosomal protein bL33 family.</text>
</comment>
<sequence length="49" mass="5876">MRVQITLACTETGDKNYITTKNKRNNPERLELKKYSPRLKRTTLHRETK</sequence>
<proteinExistence type="inferred from homology"/>
<accession>B1HZM7</accession>
<reference key="1">
    <citation type="journal article" date="2008" name="J. Bacteriol.">
        <title>Complete genome sequence of the mosquitocidal bacterium Bacillus sphaericus C3-41 and comparison with those of closely related Bacillus species.</title>
        <authorList>
            <person name="Hu X."/>
            <person name="Fan W."/>
            <person name="Han B."/>
            <person name="Liu H."/>
            <person name="Zheng D."/>
            <person name="Li Q."/>
            <person name="Dong W."/>
            <person name="Yan J."/>
            <person name="Gao M."/>
            <person name="Berry C."/>
            <person name="Yuan Z."/>
        </authorList>
    </citation>
    <scope>NUCLEOTIDE SEQUENCE [LARGE SCALE GENOMIC DNA]</scope>
    <source>
        <strain>C3-41</strain>
    </source>
</reference>
<evidence type="ECO:0000255" key="1">
    <source>
        <dbReference type="HAMAP-Rule" id="MF_00294"/>
    </source>
</evidence>
<evidence type="ECO:0000256" key="2">
    <source>
        <dbReference type="SAM" id="MobiDB-lite"/>
    </source>
</evidence>
<evidence type="ECO:0000305" key="3"/>
<protein>
    <recommendedName>
        <fullName evidence="1">Large ribosomal subunit protein bL33</fullName>
    </recommendedName>
    <alternativeName>
        <fullName evidence="3">50S ribosomal protein L33</fullName>
    </alternativeName>
</protein>
<gene>
    <name evidence="1" type="primary">rpmG</name>
    <name type="ordered locus">Bsph_4435</name>
</gene>
<dbReference type="EMBL" id="CP000817">
    <property type="protein sequence ID" value="ACA41886.1"/>
    <property type="molecule type" value="Genomic_DNA"/>
</dbReference>
<dbReference type="RefSeq" id="WP_012295907.1">
    <property type="nucleotide sequence ID" value="NC_010382.1"/>
</dbReference>
<dbReference type="SMR" id="B1HZM7"/>
<dbReference type="EnsemblBacteria" id="ACA41886">
    <property type="protein sequence ID" value="ACA41886"/>
    <property type="gene ID" value="Bsph_4435"/>
</dbReference>
<dbReference type="KEGG" id="lsp:Bsph_4435"/>
<dbReference type="HOGENOM" id="CLU_190949_0_1_9"/>
<dbReference type="Proteomes" id="UP000002164">
    <property type="component" value="Chromosome"/>
</dbReference>
<dbReference type="GO" id="GO:0005737">
    <property type="term" value="C:cytoplasm"/>
    <property type="evidence" value="ECO:0007669"/>
    <property type="project" value="UniProtKB-ARBA"/>
</dbReference>
<dbReference type="GO" id="GO:1990904">
    <property type="term" value="C:ribonucleoprotein complex"/>
    <property type="evidence" value="ECO:0007669"/>
    <property type="project" value="UniProtKB-KW"/>
</dbReference>
<dbReference type="GO" id="GO:0005840">
    <property type="term" value="C:ribosome"/>
    <property type="evidence" value="ECO:0007669"/>
    <property type="project" value="UniProtKB-KW"/>
</dbReference>
<dbReference type="GO" id="GO:0003735">
    <property type="term" value="F:structural constituent of ribosome"/>
    <property type="evidence" value="ECO:0007669"/>
    <property type="project" value="InterPro"/>
</dbReference>
<dbReference type="GO" id="GO:0006412">
    <property type="term" value="P:translation"/>
    <property type="evidence" value="ECO:0007669"/>
    <property type="project" value="UniProtKB-UniRule"/>
</dbReference>
<dbReference type="Gene3D" id="2.20.28.120">
    <property type="entry name" value="Ribosomal protein L33"/>
    <property type="match status" value="1"/>
</dbReference>
<dbReference type="HAMAP" id="MF_00294">
    <property type="entry name" value="Ribosomal_bL33"/>
    <property type="match status" value="1"/>
</dbReference>
<dbReference type="InterPro" id="IPR001705">
    <property type="entry name" value="Ribosomal_bL33"/>
</dbReference>
<dbReference type="InterPro" id="IPR018264">
    <property type="entry name" value="Ribosomal_bL33_CS"/>
</dbReference>
<dbReference type="InterPro" id="IPR038584">
    <property type="entry name" value="Ribosomal_bL33_sf"/>
</dbReference>
<dbReference type="InterPro" id="IPR011332">
    <property type="entry name" value="Ribosomal_zn-bd"/>
</dbReference>
<dbReference type="NCBIfam" id="NF001764">
    <property type="entry name" value="PRK00504.1"/>
    <property type="match status" value="1"/>
</dbReference>
<dbReference type="NCBIfam" id="NF001860">
    <property type="entry name" value="PRK00595.1"/>
    <property type="match status" value="1"/>
</dbReference>
<dbReference type="NCBIfam" id="TIGR01023">
    <property type="entry name" value="rpmG_bact"/>
    <property type="match status" value="1"/>
</dbReference>
<dbReference type="PANTHER" id="PTHR43168">
    <property type="entry name" value="50S RIBOSOMAL PROTEIN L33, CHLOROPLASTIC"/>
    <property type="match status" value="1"/>
</dbReference>
<dbReference type="PANTHER" id="PTHR43168:SF2">
    <property type="entry name" value="LARGE RIBOSOMAL SUBUNIT PROTEIN BL33C"/>
    <property type="match status" value="1"/>
</dbReference>
<dbReference type="Pfam" id="PF00471">
    <property type="entry name" value="Ribosomal_L33"/>
    <property type="match status" value="1"/>
</dbReference>
<dbReference type="SUPFAM" id="SSF57829">
    <property type="entry name" value="Zn-binding ribosomal proteins"/>
    <property type="match status" value="1"/>
</dbReference>
<dbReference type="PROSITE" id="PS00582">
    <property type="entry name" value="RIBOSOMAL_L33"/>
    <property type="match status" value="1"/>
</dbReference>
<keyword id="KW-0687">Ribonucleoprotein</keyword>
<keyword id="KW-0689">Ribosomal protein</keyword>
<name>RL33_LYSSC</name>
<organism>
    <name type="scientific">Lysinibacillus sphaericus (strain C3-41)</name>
    <dbReference type="NCBI Taxonomy" id="444177"/>
    <lineage>
        <taxon>Bacteria</taxon>
        <taxon>Bacillati</taxon>
        <taxon>Bacillota</taxon>
        <taxon>Bacilli</taxon>
        <taxon>Bacillales</taxon>
        <taxon>Bacillaceae</taxon>
        <taxon>Lysinibacillus</taxon>
    </lineage>
</organism>
<feature type="chain" id="PRO_0000356532" description="Large ribosomal subunit protein bL33">
    <location>
        <begin position="1"/>
        <end position="49"/>
    </location>
</feature>
<feature type="region of interest" description="Disordered" evidence="2">
    <location>
        <begin position="18"/>
        <end position="49"/>
    </location>
</feature>
<feature type="compositionally biased region" description="Basic and acidic residues" evidence="2">
    <location>
        <begin position="25"/>
        <end position="34"/>
    </location>
</feature>